<proteinExistence type="evidence at protein level"/>
<feature type="chain" id="PRO_0000204463" description="Methionine S-methyltransferase">
    <location>
        <begin position="1"/>
        <end position="1088"/>
    </location>
</feature>
<reference key="1">
    <citation type="journal article" date="1999" name="Plant Cell">
        <title>S-methylmethionine plays a major role in phloem sulfur transport and is synthesized by a novel type of methyltransferase.</title>
        <authorList>
            <person name="Bourgis F."/>
            <person name="Roje S."/>
            <person name="Nuccio M.L."/>
            <person name="Fisher D.B."/>
            <person name="Tarczynski M.C."/>
            <person name="Li C."/>
            <person name="Herschbach C."/>
            <person name="Rennenberg H."/>
            <person name="Pimenta M.J."/>
            <person name="Shen T.-L."/>
            <person name="Gage D.A."/>
            <person name="Hanson A.D."/>
        </authorList>
    </citation>
    <scope>NUCLEOTIDE SEQUENCE [MRNA]</scope>
    <scope>PROTEIN SEQUENCE OF 71-80; 162-196; 300-305; 380-385; 421-445; 450-462; 531-555; 704-712; 804-821; 823-825 AND 932-948</scope>
    <scope>FUNCTION</scope>
    <source>
        <tissue>Leaf</tissue>
    </source>
</reference>
<reference key="2">
    <citation type="journal article" date="1995" name="J. Biol. Chem.">
        <title>Purification and properties of S-adenosyl-L-methionine:L-methionine S-methyltransferase from Wollastonia biflora leaves.</title>
        <authorList>
            <person name="James F."/>
            <person name="Nolte K.D."/>
            <person name="Hanson A.D."/>
        </authorList>
    </citation>
    <scope>ENZYME ACTIVITY</scope>
    <scope>SUBUNIT</scope>
    <scope>BIOPHYSICOCHEMICAL PROPERTIES</scope>
</reference>
<reference key="3">
    <citation type="journal article" date="1996" name="Plant Physiol.">
        <title>Evidence that the pathway of dimethylsulfoniopropionate biosynthesis begins in the cytosol and ends in the chloroplast.</title>
        <authorList>
            <person name="Trossat C."/>
            <person name="Nolte K.D."/>
            <person name="Hanson A.D."/>
        </authorList>
    </citation>
    <scope>SUBCELLULAR LOCATION</scope>
</reference>
<comment type="function">
    <text evidence="1">Catalyzes the S-methylmethionine (SMM) biosynthesis from adenosyl-L-homocysteine (AdoMet) and methionine. SMM biosynthesis (by MMT1) and degradation (by HMT-1, HMT-2 and HMT-3) constitute the SMM cycle in plants, which is probably required to achieve short term control of AdoMet level. Also able to catalyze the selenium-methylmethionine (SeMM) from AdoMet and selenium-methionine (SeMet). May play a role in phoem sulfur transport; such function is however not essential.</text>
</comment>
<comment type="catalytic activity">
    <reaction evidence="3">
        <text>L-methionine + S-adenosyl-L-methionine = S-methyl-L-methionine + S-adenosyl-L-homocysteine</text>
        <dbReference type="Rhea" id="RHEA:13761"/>
        <dbReference type="ChEBI" id="CHEBI:57844"/>
        <dbReference type="ChEBI" id="CHEBI:57856"/>
        <dbReference type="ChEBI" id="CHEBI:58252"/>
        <dbReference type="ChEBI" id="CHEBI:59789"/>
        <dbReference type="EC" id="2.1.1.12"/>
    </reaction>
</comment>
<comment type="biophysicochemical properties">
    <phDependence>
        <text evidence="3">Optimum pH is 7.2.</text>
    </phDependence>
</comment>
<comment type="subunit">
    <text evidence="3">Homotetramer.</text>
</comment>
<comment type="subcellular location">
    <subcellularLocation>
        <location evidence="2">Cytoplasm</location>
    </subcellularLocation>
</comment>
<comment type="similarity">
    <text evidence="4">Belongs to the class I-like SAM-binding methyltransferase superfamily.</text>
</comment>
<protein>
    <recommendedName>
        <fullName>Methionine S-methyltransferase</fullName>
        <ecNumber>2.1.1.12</ecNumber>
    </recommendedName>
    <alternativeName>
        <fullName>AdoMet:Met S-methyltransferase</fullName>
    </alternativeName>
</protein>
<name>MMT1_WOLBI</name>
<evidence type="ECO:0000269" key="1">
    <source>
    </source>
</evidence>
<evidence type="ECO:0000269" key="2">
    <source>
    </source>
</evidence>
<evidence type="ECO:0000269" key="3">
    <source>
    </source>
</evidence>
<evidence type="ECO:0000305" key="4"/>
<organism>
    <name type="scientific">Wollastonia biflora</name>
    <name type="common">Beach sunflower</name>
    <name type="synonym">Wedelia biflora</name>
    <dbReference type="NCBI Taxonomy" id="101473"/>
    <lineage>
        <taxon>Eukaryota</taxon>
        <taxon>Viridiplantae</taxon>
        <taxon>Streptophyta</taxon>
        <taxon>Embryophyta</taxon>
        <taxon>Tracheophyta</taxon>
        <taxon>Spermatophyta</taxon>
        <taxon>Magnoliopsida</taxon>
        <taxon>eudicotyledons</taxon>
        <taxon>Gunneridae</taxon>
        <taxon>Pentapetalae</taxon>
        <taxon>asterids</taxon>
        <taxon>campanulids</taxon>
        <taxon>Asterales</taxon>
        <taxon>Asteraceae</taxon>
        <taxon>Asteroideae</taxon>
        <taxon>Heliantheae alliance</taxon>
        <taxon>Heliantheae</taxon>
        <taxon>Wollastonia</taxon>
    </lineage>
</organism>
<gene>
    <name type="primary">MMT1</name>
    <name type="synonym">MMT</name>
</gene>
<keyword id="KW-0963">Cytoplasm</keyword>
<keyword id="KW-0903">Direct protein sequencing</keyword>
<keyword id="KW-0489">Methyltransferase</keyword>
<keyword id="KW-0949">S-adenosyl-L-methionine</keyword>
<keyword id="KW-0808">Transferase</keyword>
<sequence length="1088" mass="121565">MAAVTGLYGSIDEFLNHCSQSGDSAYSALRSLLERLEKPDTRTEARIFLAHLQKKLDNDGASQRCLETYHFQIQDIYLDRNEGTGYQNRKKFTMMVIPSIFMPEDWSFTFYEGINRHPDSIFKDKTVAELGCGNGWISIAIAEKWLPLKVYGLDINPRAVKISWINLYLNAFDEDGQPVYDSESKTLLDRVEFYESDLLSYCRDNHIELERIVGCIPQILNPNPDAMSKLVTENASEEFLHSLSNYCALQGFVEDQFGLGLIARAVEEGIDVIKPMGIMIFNMGGRPGQGVCKRLFERRGLSVNKLWQTKILQASDTDISALVEIEKNNPHRFEFFMGLVGDRPICARTAWAFGKACGRISHALSVYSCQLRHPNEVKKIFEFLKNGFHDISNSLDLSFEDDSVADEKIPFLAYLAGVLKDGSRFPYEPPTGNKRFRDLIASFMKTYHHVPLSTDNVAIFPSRATAIENSLRLFTPRLAIVEEHLTCNLPRQWLTSLEIEQTRDSKTPIDGITVIEAPRQSDLMIELIKKLKPQVVVTGIAQFEAVTSSAFEHLLRVTREIGSRLFIDISDQFELSSLPSSIGVLKYLARTPLPSHAAIICGLLRNRVYTDLEVAFVISEEQTIFDALTRTVELLQGNTALISQYYYGCLFHELLSFQIPDRRQTAEREAENVEASDIDMIGFSSSAISVLSQSELSVRVTEKSSLLHMDVDQIFLPTPTPVKAAIFESFARQNVTETECDVTPILRQFILNTWNFSVEHSAEFIYADFPLALFNKLVLCCIEEGGSLCMPAGSNGNYAAAAKFLNANIMSIPTEAEVGFKLTAKQLSSVLETVHKPWVYISGPTINPTGLLYSNEEMKSLLTVCARYGARTIIDTSFSGIKFNSQDWDGWNLDASLAGLTGNPSFSVCLLGGLFFKIPTGGLSYGFLVLKSGFLADSFRSSFSGLNKPHNTVRYTAKKLLELGEQKGNLTGAAQGQEKLLATRLKRLKETLENCGWEVIEARGGVSVIAKPSAYLGKNIKLEKDGSTWVTKLDGTNIREAMLRATGLCINGPSWTGIPDYCRFTFALEDGDFDRALDCIVKFNQLVK</sequence>
<dbReference type="EC" id="2.1.1.12"/>
<dbReference type="EMBL" id="AF137023">
    <property type="protein sequence ID" value="AAD49573.1"/>
    <property type="molecule type" value="mRNA"/>
</dbReference>
<dbReference type="SMR" id="Q9SWR3"/>
<dbReference type="BioCyc" id="MetaCyc:MONOMER-14235"/>
<dbReference type="SABIO-RK" id="Q9SWR3"/>
<dbReference type="GO" id="GO:0005737">
    <property type="term" value="C:cytoplasm"/>
    <property type="evidence" value="ECO:0007669"/>
    <property type="project" value="UniProtKB-SubCell"/>
</dbReference>
<dbReference type="GO" id="GO:0030732">
    <property type="term" value="F:methionine S-methyltransferase activity"/>
    <property type="evidence" value="ECO:0007669"/>
    <property type="project" value="UniProtKB-EC"/>
</dbReference>
<dbReference type="GO" id="GO:0030170">
    <property type="term" value="F:pyridoxal phosphate binding"/>
    <property type="evidence" value="ECO:0007669"/>
    <property type="project" value="InterPro"/>
</dbReference>
<dbReference type="GO" id="GO:0009058">
    <property type="term" value="P:biosynthetic process"/>
    <property type="evidence" value="ECO:0007669"/>
    <property type="project" value="InterPro"/>
</dbReference>
<dbReference type="GO" id="GO:0032259">
    <property type="term" value="P:methylation"/>
    <property type="evidence" value="ECO:0007669"/>
    <property type="project" value="UniProtKB-KW"/>
</dbReference>
<dbReference type="CDD" id="cd02440">
    <property type="entry name" value="AdoMet_MTases"/>
    <property type="match status" value="1"/>
</dbReference>
<dbReference type="Gene3D" id="3.90.1150.10">
    <property type="entry name" value="Aspartate Aminotransferase, domain 1"/>
    <property type="match status" value="1"/>
</dbReference>
<dbReference type="Gene3D" id="3.40.640.10">
    <property type="entry name" value="Type I PLP-dependent aspartate aminotransferase-like (Major domain)"/>
    <property type="match status" value="1"/>
</dbReference>
<dbReference type="Gene3D" id="3.40.50.150">
    <property type="entry name" value="Vaccinia Virus protein VP39"/>
    <property type="match status" value="1"/>
</dbReference>
<dbReference type="InterPro" id="IPR004839">
    <property type="entry name" value="Aminotransferase_I/II_large"/>
</dbReference>
<dbReference type="InterPro" id="IPR025779">
    <property type="entry name" value="Met_S-MeTrfase"/>
</dbReference>
<dbReference type="InterPro" id="IPR015424">
    <property type="entry name" value="PyrdxlP-dep_Trfase"/>
</dbReference>
<dbReference type="InterPro" id="IPR015421">
    <property type="entry name" value="PyrdxlP-dep_Trfase_major"/>
</dbReference>
<dbReference type="InterPro" id="IPR015422">
    <property type="entry name" value="PyrdxlP-dep_Trfase_small"/>
</dbReference>
<dbReference type="InterPro" id="IPR029063">
    <property type="entry name" value="SAM-dependent_MTases_sf"/>
</dbReference>
<dbReference type="InterPro" id="IPR007848">
    <property type="entry name" value="Small_mtfrase_dom"/>
</dbReference>
<dbReference type="PANTHER" id="PTHR47087">
    <property type="entry name" value="METHIONINE S-METHYLTRANSFERASE"/>
    <property type="match status" value="1"/>
</dbReference>
<dbReference type="PANTHER" id="PTHR47087:SF1">
    <property type="entry name" value="METHIONINE S-METHYLTRANSFERASE"/>
    <property type="match status" value="1"/>
</dbReference>
<dbReference type="Pfam" id="PF00155">
    <property type="entry name" value="Aminotran_1_2"/>
    <property type="match status" value="1"/>
</dbReference>
<dbReference type="Pfam" id="PF05175">
    <property type="entry name" value="MTS"/>
    <property type="match status" value="1"/>
</dbReference>
<dbReference type="SUPFAM" id="SSF53383">
    <property type="entry name" value="PLP-dependent transferases"/>
    <property type="match status" value="2"/>
</dbReference>
<dbReference type="SUPFAM" id="SSF53335">
    <property type="entry name" value="S-adenosyl-L-methionine-dependent methyltransferases"/>
    <property type="match status" value="1"/>
</dbReference>
<dbReference type="PROSITE" id="PS51555">
    <property type="entry name" value="SAM_MT12"/>
    <property type="match status" value="1"/>
</dbReference>
<accession>Q9SWR3</accession>